<proteinExistence type="evidence at protein level"/>
<comment type="subcellular location">
    <subcellularLocation>
        <location evidence="1">Secreted</location>
    </subcellularLocation>
</comment>
<comment type="allergen">
    <text>Causes an allergic reaction in human.</text>
</comment>
<comment type="similarity">
    <text evidence="4">Belongs to the peptidase S9C family.</text>
</comment>
<keyword id="KW-0020">Allergen</keyword>
<keyword id="KW-0325">Glycoprotein</keyword>
<keyword id="KW-0378">Hydrolase</keyword>
<keyword id="KW-0645">Protease</keyword>
<keyword id="KW-0964">Secreted</keyword>
<keyword id="KW-0720">Serine protease</keyword>
<keyword id="KW-0732">Signal</keyword>
<organism>
    <name type="scientific">Arthroderma benhamiae</name>
    <name type="common">Trichophyton mentagrophytes</name>
    <dbReference type="NCBI Taxonomy" id="63400"/>
    <lineage>
        <taxon>Eukaryota</taxon>
        <taxon>Fungi</taxon>
        <taxon>Dikarya</taxon>
        <taxon>Ascomycota</taxon>
        <taxon>Pezizomycotina</taxon>
        <taxon>Eurotiomycetes</taxon>
        <taxon>Eurotiomycetidae</taxon>
        <taxon>Onygenales</taxon>
        <taxon>Arthrodermataceae</taxon>
        <taxon>Trichophyton</taxon>
    </lineage>
</organism>
<evidence type="ECO:0000250" key="1"/>
<evidence type="ECO:0000255" key="2"/>
<evidence type="ECO:0000256" key="3">
    <source>
        <dbReference type="SAM" id="MobiDB-lite"/>
    </source>
</evidence>
<evidence type="ECO:0000305" key="4"/>
<reference key="1">
    <citation type="submission" date="2002-02" db="EMBL/GenBank/DDBJ databases">
        <title>Development of DNA markers to explore the genetic relatedness of strains of the two dermatophyte species causing Favus of human and mouse.</title>
        <authorList>
            <person name="Probst S."/>
            <person name="Polyakov I."/>
            <person name="Ivanova L."/>
            <person name="Graeser Y."/>
        </authorList>
    </citation>
    <scope>NUCLEOTIDE SEQUENCE [GENOMIC DNA]</scope>
    <source>
        <strain>CBS 764.84</strain>
    </source>
</reference>
<protein>
    <recommendedName>
        <fullName>Dipeptidyl-peptidase 5</fullName>
        <ecNumber>3.4.14.-</ecNumber>
    </recommendedName>
    <alternativeName>
        <fullName>Dipeptidyl-peptidase V</fullName>
        <shortName>DPP V</shortName>
        <shortName>DppV</shortName>
    </alternativeName>
    <allergenName>Tri m 4</allergenName>
</protein>
<sequence>MAAAKWLIASLAFASSGLAFTPEDFISAPRRGEAIPDPKGELAVFHVSKYNFDKKDRPSGWNLLNLKNGDISVLTTDSDVSEITWLGDGTKVVYVNGTDSVEGGVGIWISDAKNFGNAYKAGSVNGAFSGLKLAKAGDKINFVGYGQSTTKGDLYNEAAAKEAVSSARIYDGLFVRHWDTYVGTQFNAVFSGSLTKNGDKYSFDGKLKNLVQPVKYAESPYPPFGGSGDYDLSSDGKTVAFMSKAPELPKANLTTSYIFLVPHDGSRVAEPINKRNGPRTPQGIEGASSSPVFSPDGKRIAYLQMATKNYESDRRVIHIAEVGSNKPVQRIASSWDRSPEAVKWSSDGRTLYVTAEDHATGKLFTLPADARDNHKPSVVKHDGSVSSFYFIGSSKSVLISGNSLWSNALYQVATPGRPNRKLFYANEHDPELKGLGPKDIEPLWVDGARTKIHSWIVKPTGFDKNKVYPLAFLIHGGPQGSWGDSWSTRWNPRVWADQGYVVVAPNPTGSTGFGQKLTDDITNDWGGAPYKDLVKIWEHVRDHIKYIDTDNGIAAGASFGGFMVNWIQGQDLGRKFKALVSHDGTFVGSSKIGTDELFFIEHDFNGTFFEARQNYDRWDCSKPELVAKWSTPQLVIHNDFDFRLSVAEGVGLFNVLQEKGIPSRFLNFPDETHWVTKPENSLVWHQQVLGWINKWSGINKSNPKSIKLSDCPIEVIDHEAHSYFDY</sequence>
<feature type="signal peptide" evidence="2">
    <location>
        <begin position="1"/>
        <end position="19"/>
    </location>
</feature>
<feature type="chain" id="PRO_0000027222" description="Dipeptidyl-peptidase 5">
    <location>
        <begin position="20"/>
        <end position="726"/>
    </location>
</feature>
<feature type="region of interest" description="Disordered" evidence="3">
    <location>
        <begin position="269"/>
        <end position="291"/>
    </location>
</feature>
<feature type="active site" description="Charge relay system" evidence="1">
    <location>
        <position position="558"/>
    </location>
</feature>
<feature type="active site" description="Charge relay system" evidence="1">
    <location>
        <position position="641"/>
    </location>
</feature>
<feature type="active site" description="Charge relay system" evidence="1">
    <location>
        <position position="673"/>
    </location>
</feature>
<feature type="glycosylation site" description="N-linked (GlcNAc...) asparagine" evidence="2">
    <location>
        <position position="96"/>
    </location>
</feature>
<feature type="glycosylation site" description="N-linked (GlcNAc...) asparagine" evidence="2">
    <location>
        <position position="252"/>
    </location>
</feature>
<feature type="glycosylation site" description="N-linked (GlcNAc...) asparagine" evidence="2">
    <location>
        <position position="605"/>
    </location>
</feature>
<feature type="glycosylation site" description="N-linked (GlcNAc...) asparagine" evidence="2">
    <location>
        <position position="699"/>
    </location>
</feature>
<dbReference type="EC" id="3.4.14.-"/>
<dbReference type="EMBL" id="AJ430836">
    <property type="protein sequence ID" value="CAD23611.1"/>
    <property type="molecule type" value="Genomic_DNA"/>
</dbReference>
<dbReference type="SMR" id="Q8J1M3"/>
<dbReference type="ESTHER" id="artbe-DPP5">
    <property type="family name" value="Prolyl_oligopeptidase_S9"/>
</dbReference>
<dbReference type="MEROPS" id="S09.012"/>
<dbReference type="GlyCosmos" id="Q8J1M3">
    <property type="glycosylation" value="4 sites, No reported glycans"/>
</dbReference>
<dbReference type="GO" id="GO:0005576">
    <property type="term" value="C:extracellular region"/>
    <property type="evidence" value="ECO:0007669"/>
    <property type="project" value="UniProtKB-SubCell"/>
</dbReference>
<dbReference type="GO" id="GO:0004252">
    <property type="term" value="F:serine-type endopeptidase activity"/>
    <property type="evidence" value="ECO:0007669"/>
    <property type="project" value="TreeGrafter"/>
</dbReference>
<dbReference type="GO" id="GO:0006508">
    <property type="term" value="P:proteolysis"/>
    <property type="evidence" value="ECO:0007669"/>
    <property type="project" value="UniProtKB-KW"/>
</dbReference>
<dbReference type="FunFam" id="3.40.50.1820:FF:000028">
    <property type="entry name" value="S9 family peptidase"/>
    <property type="match status" value="1"/>
</dbReference>
<dbReference type="Gene3D" id="3.40.50.1820">
    <property type="entry name" value="alpha/beta hydrolase"/>
    <property type="match status" value="1"/>
</dbReference>
<dbReference type="Gene3D" id="2.120.10.30">
    <property type="entry name" value="TolB, C-terminal domain"/>
    <property type="match status" value="1"/>
</dbReference>
<dbReference type="InterPro" id="IPR011042">
    <property type="entry name" value="6-blade_b-propeller_TolB-like"/>
</dbReference>
<dbReference type="InterPro" id="IPR029058">
    <property type="entry name" value="AB_hydrolase_fold"/>
</dbReference>
<dbReference type="InterPro" id="IPR011659">
    <property type="entry name" value="PD40"/>
</dbReference>
<dbReference type="InterPro" id="IPR001375">
    <property type="entry name" value="Peptidase_S9_cat"/>
</dbReference>
<dbReference type="PANTHER" id="PTHR42776:SF11">
    <property type="entry name" value="DIPEPTIDYL-PEPTIDASE 5-RELATED"/>
    <property type="match status" value="1"/>
</dbReference>
<dbReference type="PANTHER" id="PTHR42776">
    <property type="entry name" value="SERINE PEPTIDASE S9 FAMILY MEMBER"/>
    <property type="match status" value="1"/>
</dbReference>
<dbReference type="Pfam" id="PF07676">
    <property type="entry name" value="PD40"/>
    <property type="match status" value="1"/>
</dbReference>
<dbReference type="Pfam" id="PF00326">
    <property type="entry name" value="Peptidase_S9"/>
    <property type="match status" value="1"/>
</dbReference>
<dbReference type="SUPFAM" id="SSF53474">
    <property type="entry name" value="alpha/beta-Hydrolases"/>
    <property type="match status" value="1"/>
</dbReference>
<dbReference type="SUPFAM" id="SSF69322">
    <property type="entry name" value="Tricorn protease domain 2"/>
    <property type="match status" value="1"/>
</dbReference>
<name>DPP5_ARTBE</name>
<gene>
    <name type="primary">DPPV</name>
</gene>
<accession>Q8J1M3</accession>